<proteinExistence type="evidence at protein level"/>
<sequence length="217" mass="25049">MATVEPETTPTPNPPPAEEEKTESNQEVANPEHYIKHPLQNRWALWFFKNDKSKTWQANLRLISKFDTVEDFWALYNHIQLSSNLMPGCDYSLFKDGIEPMWEDEKNKRGGRWLITLNKQQRRSDLDRFWLETLLCLIGESFDDYSDDVCGAVVNVRAKGDKIAIWTTECENRDAVTHIGRVYKERLGLPPKIVIGYQSHADTATKSGSTTKNRFVV</sequence>
<gene>
    <name type="primary">EIF4E</name>
</gene>
<organism>
    <name type="scientific">Oryctolagus cuniculus</name>
    <name type="common">Rabbit</name>
    <dbReference type="NCBI Taxonomy" id="9986"/>
    <lineage>
        <taxon>Eukaryota</taxon>
        <taxon>Metazoa</taxon>
        <taxon>Chordata</taxon>
        <taxon>Craniata</taxon>
        <taxon>Vertebrata</taxon>
        <taxon>Euteleostomi</taxon>
        <taxon>Mammalia</taxon>
        <taxon>Eutheria</taxon>
        <taxon>Euarchontoglires</taxon>
        <taxon>Glires</taxon>
        <taxon>Lagomorpha</taxon>
        <taxon>Leporidae</taxon>
        <taxon>Oryctolagus</taxon>
    </lineage>
</organism>
<comment type="function">
    <text evidence="1 2 3">Acts in the cytoplasm to initiate and regulate protein synthesis and is required in the nucleus for export of a subset of mRNAs from the nucleus to the cytoplasm which promotes processes such as RNA capping, processing and splicing (By similarity). Component of the protein complex eIF4F, which is involved in the recognition of the mRNA cap, ATP-dependent unwinding of 5'-terminal secondary structure and recruitment of mRNA to the ribosome (By similarity). This protein recognizes and binds the 7-methylguanosine (m7G)-containing mRNA cap during an early step in the initiation of protein synthesis and facilitates ribosome binding by inducing the unwinding of the mRNAs secondary structures (By similarity). Together with EIF4G1, antagonizes the scanning promoted by EIF1-EIF4G1 and is required for TISU translation, a process where the TISU element recognition makes scanning unnecessary (By similarity). In addition to its role in translation initiation, also acts as a regulator of translation and stability in the cytoplasm (By similarity). Component of the CYFIP1-EIF4E-FMR1 complex which binds to the mRNA cap and mediates translational repression: in the complex, EIF4E mediates the binding to the mRNA cap. Component of a multiprotein complex that sequesters and represses translation of proneurogenic factors during neurogenesis (By similarity). In P-bodies, component of a complex that mediates the storage of translationally inactive mRNAs in the cytoplasm and prevents their degradation (By similarity). May play an important role in spermatogenesis through translational regulation of stage-specific mRNAs during germ cell development (By similarity). As well as its roles in translation, also involved in mRNA nucleocytoplasmic transport (By similarity). Its role in mRNA export from the nucleus to the cytoplasm relies on its ability to bind the m7G cap of RNAs and on the presence of the 50-nucleotide EIF4E sensitivity element (4ESE) in the 3'UTR of sensitive transcripts (By similarity). Interaction with the 4ESE is mediated by LRPPRC which binds simultaneously to both EIF4E and the 4ESE, thereby acting as a platform for assembly for the RNA export complex (By similarity). EIF4E-dependent mRNA export is independent of ongoing protein or RNA synthesis and is also NFX1-independent but is XPO1-dependent with LRPPRC interacting with XPO1 to form an EIF4E-dependent mRNA export complex (By similarity). Alters the composition of the cytoplasmic face of the nuclear pore to promote RNA export by reducing RANBP2 expression, relocalizing nucleoporin NUP214 and increasing expression of RANBP1 and RNA export factors DDX19 and GLE1. Promotes the nuclear export of cyclin CCND1 mRNA (By similarity). Promotes the nuclear export of NOS2/iNOS mRNA (By similarity). Promotes the nuclear export of MDM2 mRNA (By similarity). Also promotes the export of additional mRNAs, including others involved in the cell cycle (By similarity). In the nucleus, binds to capped splice factor-encoding mRNAs and stimulates their nuclear export to enhance splice factor production by increasing their cytoplasmic availability to the translation machinery (By similarity). May also regulate splicing through interaction with the spliceosome in an RNA and m7G cap-dependent manner (By similarity). Also binds to some pre-mRNAs and may play a role in their recruitment to the spliceosome (By similarity). Promotes steady-state capping of a subset of coding and non-coding RNAs by mediating nuclear export of capping machinery mRNAs including RNMT, RNGTT and RAMAC to enhance their translation (By similarity). Stimulates mRNA 3'-end processing by promoting the expression of several core cleavage complex factors required for mRNA cleavage and polyadenylation, and may also have a direct effect through its interaction with the CPSF3 cleavage enzyme (By similarity). Rescues cells from apoptosis by promoting activation of serine/threonine-protein kinase AKT1 through mRNA export of NBS1 which potentiates AKT1 phosphorylation and also through mRNA export of AKT1 effectors, allowing for increased production of these proteins (By similarity).</text>
</comment>
<comment type="subunit">
    <text evidence="1 2 5">eIF4F is a multi-subunit complex, the composition of which varies with external and internal environmental conditions (By similarity). It is composed of at least EIF4A, EIF4E and EIF4G1/EIF4G3 (PubMed:6853548). EIF4E is also known to interact with other partners. Interacts with EIF4ENIF1/4E-T; promotes recruitment to P-bodies and import into the nucleus. Hypophosphorylated EIF4EBP1, EIF4EBP2 and EIF4EBP3 compete with EIF4G1/EIF4G3 to interact with EIF4E; insulin stimulated MAP-kinase (MAPK1 and MAPK3) phosphorylation of EIF4EBP1 causes dissociation of the complex allowing EIF4G1/EIF4G3 to bind and consequent initiation of translation. Interacts mutually exclusive with EIF4A1 or EIF4A2 (By similarity). Interacts with NGDN and PIWIL2. Component of the CYFIP1-EIF4E-FMR1 complex composed of CYFIP, EIF4E and FMR1. Interacts directly with CYFIP1. Interacts with CLOCK (By similarity). Binds to MKNK2 in nucleus. Interacts with LIMD1, WTIP and AJUBA. Interacts with APOBEC3G in an RNA-dependent manner. Interacts with LARP1. Interacts with METTL3. Interacts with RBM24; this interaction prevents EIF4E from binding to p53/TP53 mRNA and inhibits the assembly of translation initiation complex. Interacts with DDX3X; interaction is direct and in an RNA-independent manner; this interaction enhances EIF4E cap-binding ability and is required for the repression of cap-dependent translation and the increase of IRES-mediated translation. DDX3X competes with EIF4G1 for interaction with EIF4E (By similarity). Interacts with EIF4G1; which in a mutual exclusive interaction associates either with EIF1 or with EIF4E on a common binding site (By similarity). Interacts with BTG4 and CNOT7 (By similarity). Interacts with LRPPRC (via N-terminus); the interaction promotes association of EIF4E with 4ESE-containing mRNAs (By similarity). Interacts with mRNA cleavage enzyme CPSF3 and its cofactor CPSF1 (By similarity). Interacts (via RING-type zinc finger) with PML; the interaction results in conformational changes of both interacting proteins and reduces EIF4E affinity for the 5' m7G cap of mRNA, thus reducing EIF4E-mediated mRNA nuclear export (By similarity). Interacts with homeobox protein HHEX/PRH; the interaction inhibits EIF4E-mediated mRNA nuclear export (By similarity). Interacts with homeobox protein HOXA9; the interaction positively regulates EIF4E-mediated mRNA nuclear export (By similarity). Interacts with homeobox protein EMX2 (By similarity).</text>
</comment>
<comment type="subcellular location">
    <subcellularLocation>
        <location evidence="1">Cytoplasm</location>
        <location evidence="1">P-body</location>
    </subcellularLocation>
    <subcellularLocation>
        <location evidence="1">Cytoplasm</location>
    </subcellularLocation>
    <subcellularLocation>
        <location evidence="1">Cytoplasm</location>
        <location evidence="1">Stress granule</location>
    </subcellularLocation>
    <subcellularLocation>
        <location evidence="1">Nucleus</location>
    </subcellularLocation>
    <subcellularLocation>
        <location evidence="1">Nucleus speckle</location>
    </subcellularLocation>
    <subcellularLocation>
        <location evidence="2">Nucleus</location>
        <location evidence="2">Nuclear body</location>
    </subcellularLocation>
    <text evidence="1 2">Interaction with EIF4ENIF1/4E-T is required for localization to processing bodies (P-bodies). Imported in the nucleus via interaction with EIF4ENIF1/4E-T via a piggy-back mechanism (By similarity). Sequestered in the nucleus by EIF4EBP1 and EIF4EBP2 (By similarity).</text>
</comment>
<comment type="PTM">
    <text evidence="1 2">Phosphorylation increases the ability of the protein to bind to mRNA caps and to form the eIF4F complex (By similarity). Phosphorylation also enhances its mRNA transport function (By similarity). Phosphorylation at Ser-209 is not essential for protein synthesis (By similarity).</text>
</comment>
<comment type="similarity">
    <text evidence="6">Belongs to the eukaryotic initiation factor 4E family.</text>
</comment>
<accession>P29338</accession>
<feature type="initiator methionine" description="Removed" evidence="1">
    <location>
        <position position="1"/>
    </location>
</feature>
<feature type="chain" id="PRO_0000193636" description="Eukaryotic translation initiation factor 4E">
    <location>
        <begin position="2"/>
        <end position="217"/>
    </location>
</feature>
<feature type="region of interest" description="Disordered" evidence="4">
    <location>
        <begin position="1"/>
        <end position="27"/>
    </location>
</feature>
<feature type="region of interest" description="EIF4EBP1/2/3 binding" evidence="1">
    <location>
        <begin position="37"/>
        <end position="40"/>
    </location>
</feature>
<feature type="region of interest" description="EIF4EBP1/2/3 binding" evidence="1">
    <location>
        <begin position="73"/>
        <end position="77"/>
    </location>
</feature>
<feature type="region of interest" description="EIF4EBP1/2/3 binding" evidence="1">
    <location>
        <begin position="132"/>
        <end position="139"/>
    </location>
</feature>
<feature type="binding site" evidence="1">
    <location>
        <begin position="56"/>
        <end position="57"/>
    </location>
    <ligand>
        <name>mRNA</name>
        <dbReference type="ChEBI" id="CHEBI:33699"/>
    </ligand>
    <ligandPart>
        <name>N(7)-methylguanosine 5'-triphosphate group</name>
        <dbReference type="ChEBI" id="CHEBI:74429"/>
        <note>m7GTP residue in mRNA cap</note>
    </ligandPart>
</feature>
<feature type="binding site" evidence="1">
    <location>
        <begin position="102"/>
        <end position="103"/>
    </location>
    <ligand>
        <name>mRNA</name>
        <dbReference type="ChEBI" id="CHEBI:33699"/>
    </ligand>
    <ligandPart>
        <name>N(7)-methylguanosine 5'-triphosphate group</name>
        <dbReference type="ChEBI" id="CHEBI:74429"/>
        <note>m7GTP residue in mRNA cap</note>
    </ligandPart>
</feature>
<feature type="binding site" evidence="1">
    <location>
        <begin position="157"/>
        <end position="162"/>
    </location>
    <ligand>
        <name>mRNA</name>
        <dbReference type="ChEBI" id="CHEBI:33699"/>
    </ligand>
    <ligandPart>
        <name>N(7)-methylguanosine 5'-triphosphate group</name>
        <dbReference type="ChEBI" id="CHEBI:74429"/>
        <note>m7GTP residue in mRNA cap</note>
    </ligandPart>
</feature>
<feature type="binding site" evidence="1">
    <location>
        <begin position="205"/>
        <end position="207"/>
    </location>
    <ligand>
        <name>mRNA</name>
        <dbReference type="ChEBI" id="CHEBI:33699"/>
    </ligand>
    <ligandPart>
        <name>N(7)-methylguanosine 5'-triphosphate group</name>
        <dbReference type="ChEBI" id="CHEBI:74429"/>
        <note>m7GTP residue in mRNA cap</note>
    </ligandPart>
</feature>
<feature type="modified residue" description="N-acetylalanine" evidence="1">
    <location>
        <position position="2"/>
    </location>
</feature>
<feature type="modified residue" description="Phosphothreonine" evidence="1">
    <location>
        <position position="22"/>
    </location>
</feature>
<feature type="modified residue" description="Phosphoserine; by PKC and MKNK2" evidence="1">
    <location>
        <position position="209"/>
    </location>
</feature>
<keyword id="KW-0007">Acetylation</keyword>
<keyword id="KW-0963">Cytoplasm</keyword>
<keyword id="KW-0396">Initiation factor</keyword>
<keyword id="KW-0509">mRNA transport</keyword>
<keyword id="KW-0539">Nucleus</keyword>
<keyword id="KW-0597">Phosphoprotein</keyword>
<keyword id="KW-0648">Protein biosynthesis</keyword>
<keyword id="KW-1185">Reference proteome</keyword>
<keyword id="KW-0694">RNA-binding</keyword>
<keyword id="KW-0810">Translation regulation</keyword>
<keyword id="KW-0813">Transport</keyword>
<protein>
    <recommendedName>
        <fullName>Eukaryotic translation initiation factor 4E</fullName>
        <shortName>eIF-4E</shortName>
        <shortName>eIF4E</shortName>
    </recommendedName>
    <alternativeName>
        <fullName>eIF-4F 25 kDa subunit</fullName>
    </alternativeName>
    <alternativeName>
        <fullName>mRNA cap-binding protein</fullName>
    </alternativeName>
</protein>
<evidence type="ECO:0000250" key="1">
    <source>
        <dbReference type="UniProtKB" id="P06730"/>
    </source>
</evidence>
<evidence type="ECO:0000250" key="2">
    <source>
        <dbReference type="UniProtKB" id="P63073"/>
    </source>
</evidence>
<evidence type="ECO:0000250" key="3">
    <source>
        <dbReference type="UniProtKB" id="P63074"/>
    </source>
</evidence>
<evidence type="ECO:0000256" key="4">
    <source>
        <dbReference type="SAM" id="MobiDB-lite"/>
    </source>
</evidence>
<evidence type="ECO:0000269" key="5">
    <source>
    </source>
</evidence>
<evidence type="ECO:0000305" key="6"/>
<reference key="1">
    <citation type="journal article" date="1992" name="Nucleic Acids Res.">
        <title>Nucleotide sequence of rabbit eIF-4E cDNA.</title>
        <authorList>
            <person name="Rychlik W."/>
            <person name="Rhoads R.E."/>
        </authorList>
    </citation>
    <scope>NUCLEOTIDE SEQUENCE [MRNA]</scope>
    <source>
        <tissue>Brain</tissue>
    </source>
</reference>
<reference key="2">
    <citation type="journal article" date="1983" name="J. Biol. Chem.">
        <title>New initiation factor activity required for globin mRNA translation.</title>
        <authorList>
            <person name="Grifo J.A."/>
            <person name="Tahara S.M."/>
            <person name="Morgan M.A."/>
            <person name="Shatkin A.J."/>
            <person name="Merrick W.C."/>
        </authorList>
    </citation>
    <scope>INTERACTION WITH EIF4A</scope>
</reference>
<dbReference type="EMBL" id="X61939">
    <property type="protein sequence ID" value="CAA43943.1"/>
    <property type="molecule type" value="mRNA"/>
</dbReference>
<dbReference type="PIR" id="S30248">
    <property type="entry name" value="B26411"/>
</dbReference>
<dbReference type="RefSeq" id="NP_001095180.1">
    <property type="nucleotide sequence ID" value="NM_001101710.1"/>
</dbReference>
<dbReference type="BMRB" id="P29338"/>
<dbReference type="SMR" id="P29338"/>
<dbReference type="FunCoup" id="P29338">
    <property type="interactions" value="1555"/>
</dbReference>
<dbReference type="STRING" id="9986.ENSOCUP00000032078"/>
<dbReference type="BindingDB" id="P29338"/>
<dbReference type="ChEMBL" id="CHEMBL5636"/>
<dbReference type="iPTMnet" id="P29338"/>
<dbReference type="PaxDb" id="9986-ENSOCUP00000024878"/>
<dbReference type="GeneID" id="100009338"/>
<dbReference type="KEGG" id="ocu:100009338"/>
<dbReference type="CTD" id="1977"/>
<dbReference type="eggNOG" id="KOG1670">
    <property type="taxonomic scope" value="Eukaryota"/>
</dbReference>
<dbReference type="InParanoid" id="P29338"/>
<dbReference type="OrthoDB" id="590761at2759"/>
<dbReference type="TreeFam" id="TF101526"/>
<dbReference type="PRO" id="PR:P29338"/>
<dbReference type="Proteomes" id="UP000001811">
    <property type="component" value="Unplaced"/>
</dbReference>
<dbReference type="GO" id="GO:0005737">
    <property type="term" value="C:cytoplasm"/>
    <property type="evidence" value="ECO:0000250"/>
    <property type="project" value="AgBase"/>
</dbReference>
<dbReference type="GO" id="GO:0010494">
    <property type="term" value="C:cytoplasmic stress granule"/>
    <property type="evidence" value="ECO:0000250"/>
    <property type="project" value="UniProtKB"/>
</dbReference>
<dbReference type="GO" id="GO:0005829">
    <property type="term" value="C:cytosol"/>
    <property type="evidence" value="ECO:0000250"/>
    <property type="project" value="UniProtKB"/>
</dbReference>
<dbReference type="GO" id="GO:0016281">
    <property type="term" value="C:eukaryotic translation initiation factor 4F complex"/>
    <property type="evidence" value="ECO:0000250"/>
    <property type="project" value="UniProtKB"/>
</dbReference>
<dbReference type="GO" id="GO:0016604">
    <property type="term" value="C:nuclear body"/>
    <property type="evidence" value="ECO:0000250"/>
    <property type="project" value="UniProtKB"/>
</dbReference>
<dbReference type="GO" id="GO:0016607">
    <property type="term" value="C:nuclear speck"/>
    <property type="evidence" value="ECO:0000250"/>
    <property type="project" value="UniProtKB"/>
</dbReference>
<dbReference type="GO" id="GO:0005634">
    <property type="term" value="C:nucleus"/>
    <property type="evidence" value="ECO:0000250"/>
    <property type="project" value="UniProtKB"/>
</dbReference>
<dbReference type="GO" id="GO:0000932">
    <property type="term" value="C:P-body"/>
    <property type="evidence" value="ECO:0000250"/>
    <property type="project" value="UniProtKB"/>
</dbReference>
<dbReference type="GO" id="GO:0048471">
    <property type="term" value="C:perinuclear region of cytoplasm"/>
    <property type="evidence" value="ECO:0000250"/>
    <property type="project" value="AgBase"/>
</dbReference>
<dbReference type="GO" id="GO:0140297">
    <property type="term" value="F:DNA-binding transcription factor binding"/>
    <property type="evidence" value="ECO:0000250"/>
    <property type="project" value="AgBase"/>
</dbReference>
<dbReference type="GO" id="GO:0019899">
    <property type="term" value="F:enzyme binding"/>
    <property type="evidence" value="ECO:0000250"/>
    <property type="project" value="AgBase"/>
</dbReference>
<dbReference type="GO" id="GO:0031370">
    <property type="term" value="F:eukaryotic initiation factor 4G binding"/>
    <property type="evidence" value="ECO:0000250"/>
    <property type="project" value="AgBase"/>
</dbReference>
<dbReference type="GO" id="GO:0098808">
    <property type="term" value="F:mRNA cap binding"/>
    <property type="evidence" value="ECO:0000250"/>
    <property type="project" value="UniProtKB"/>
</dbReference>
<dbReference type="GO" id="GO:0000340">
    <property type="term" value="F:RNA 7-methylguanosine cap binding"/>
    <property type="evidence" value="ECO:0000250"/>
    <property type="project" value="UniProtKB"/>
</dbReference>
<dbReference type="GO" id="GO:0003743">
    <property type="term" value="F:translation initiation factor activity"/>
    <property type="evidence" value="ECO:0000250"/>
    <property type="project" value="UniProtKB"/>
</dbReference>
<dbReference type="GO" id="GO:0006406">
    <property type="term" value="P:mRNA export from nucleus"/>
    <property type="evidence" value="ECO:0000250"/>
    <property type="project" value="UniProtKB"/>
</dbReference>
<dbReference type="GO" id="GO:0006417">
    <property type="term" value="P:regulation of translation"/>
    <property type="evidence" value="ECO:0000250"/>
    <property type="project" value="UniProtKB"/>
</dbReference>
<dbReference type="GO" id="GO:0006413">
    <property type="term" value="P:translational initiation"/>
    <property type="evidence" value="ECO:0000250"/>
    <property type="project" value="UniProtKB"/>
</dbReference>
<dbReference type="FunFam" id="3.30.760.10:FF:000002">
    <property type="entry name" value="Eukaryotic translation initiation factor 4E"/>
    <property type="match status" value="1"/>
</dbReference>
<dbReference type="Gene3D" id="3.30.760.10">
    <property type="entry name" value="RNA Cap, Translation Initiation Factor Eif4e"/>
    <property type="match status" value="1"/>
</dbReference>
<dbReference type="InterPro" id="IPR023398">
    <property type="entry name" value="TIF_eIF4e-like"/>
</dbReference>
<dbReference type="InterPro" id="IPR001040">
    <property type="entry name" value="TIF_eIF_4E"/>
</dbReference>
<dbReference type="InterPro" id="IPR019770">
    <property type="entry name" value="TIF_eIF_4E_CS"/>
</dbReference>
<dbReference type="PANTHER" id="PTHR11960:SF14">
    <property type="entry name" value="EUKARYOTIC TRANSLATION INITIATION FACTOR 4E"/>
    <property type="match status" value="1"/>
</dbReference>
<dbReference type="PANTHER" id="PTHR11960">
    <property type="entry name" value="EUKARYOTIC TRANSLATION INITIATION FACTOR 4E RELATED"/>
    <property type="match status" value="1"/>
</dbReference>
<dbReference type="Pfam" id="PF01652">
    <property type="entry name" value="IF4E"/>
    <property type="match status" value="1"/>
</dbReference>
<dbReference type="SUPFAM" id="SSF55418">
    <property type="entry name" value="eIF4e-like"/>
    <property type="match status" value="1"/>
</dbReference>
<dbReference type="PROSITE" id="PS00813">
    <property type="entry name" value="IF4E"/>
    <property type="match status" value="1"/>
</dbReference>
<name>IF4E_RABIT</name>